<keyword id="KW-0406">Ion transport</keyword>
<keyword id="KW-0408">Iron</keyword>
<keyword id="KW-0410">Iron transport</keyword>
<keyword id="KW-0472">Membrane</keyword>
<keyword id="KW-0496">Mitochondrion</keyword>
<keyword id="KW-0999">Mitochondrion inner membrane</keyword>
<keyword id="KW-1185">Reference proteome</keyword>
<keyword id="KW-0677">Repeat</keyword>
<keyword id="KW-0812">Transmembrane</keyword>
<keyword id="KW-1133">Transmembrane helix</keyword>
<keyword id="KW-0813">Transport</keyword>
<reference key="1">
    <citation type="journal article" date="2004" name="Genome Res.">
        <title>The status, quality, and expansion of the NIH full-length cDNA project: the Mammalian Gene Collection (MGC).</title>
        <authorList>
            <consortium name="The MGC Project Team"/>
        </authorList>
    </citation>
    <scope>NUCLEOTIDE SEQUENCE [LARGE SCALE MRNA]</scope>
    <source>
        <tissue>Testis</tissue>
    </source>
</reference>
<proteinExistence type="evidence at transcript level"/>
<dbReference type="EMBL" id="BC082071">
    <property type="protein sequence ID" value="AAH82071.1"/>
    <property type="molecule type" value="mRNA"/>
</dbReference>
<dbReference type="RefSeq" id="NP_001014018.1">
    <property type="nucleotide sequence ID" value="NM_001013996.1"/>
</dbReference>
<dbReference type="SMR" id="Q66H23"/>
<dbReference type="FunCoup" id="Q66H23">
    <property type="interactions" value="2199"/>
</dbReference>
<dbReference type="STRING" id="10116.ENSRNOP00000021636"/>
<dbReference type="PhosphoSitePlus" id="Q66H23"/>
<dbReference type="PaxDb" id="10116-ENSRNOP00000021636"/>
<dbReference type="GeneID" id="306000"/>
<dbReference type="KEGG" id="rno:306000"/>
<dbReference type="UCSC" id="RGD:1359361">
    <property type="organism name" value="rat"/>
</dbReference>
<dbReference type="AGR" id="RGD:1359361"/>
<dbReference type="CTD" id="51312"/>
<dbReference type="RGD" id="1359361">
    <property type="gene designation" value="Slc25a37"/>
</dbReference>
<dbReference type="VEuPathDB" id="HostDB:ENSRNOG00000015495"/>
<dbReference type="eggNOG" id="KOG0760">
    <property type="taxonomic scope" value="Eukaryota"/>
</dbReference>
<dbReference type="HOGENOM" id="CLU_015166_3_1_1"/>
<dbReference type="InParanoid" id="Q66H23"/>
<dbReference type="PhylomeDB" id="Q66H23"/>
<dbReference type="TreeFam" id="TF314118"/>
<dbReference type="PRO" id="PR:Q66H23"/>
<dbReference type="Proteomes" id="UP000002494">
    <property type="component" value="Chromosome 15"/>
</dbReference>
<dbReference type="Bgee" id="ENSRNOG00000015495">
    <property type="expression patterns" value="Expressed in spleen and 18 other cell types or tissues"/>
</dbReference>
<dbReference type="GO" id="GO:0005743">
    <property type="term" value="C:mitochondrial inner membrane"/>
    <property type="evidence" value="ECO:0000266"/>
    <property type="project" value="RGD"/>
</dbReference>
<dbReference type="GO" id="GO:0031966">
    <property type="term" value="C:mitochondrial membrane"/>
    <property type="evidence" value="ECO:0000318"/>
    <property type="project" value="GO_Central"/>
</dbReference>
<dbReference type="GO" id="GO:0005739">
    <property type="term" value="C:mitochondrion"/>
    <property type="evidence" value="ECO:0000250"/>
    <property type="project" value="UniProtKB"/>
</dbReference>
<dbReference type="GO" id="GO:0015093">
    <property type="term" value="F:ferrous iron transmembrane transporter activity"/>
    <property type="evidence" value="ECO:0000266"/>
    <property type="project" value="RGD"/>
</dbReference>
<dbReference type="GO" id="GO:0005381">
    <property type="term" value="F:iron ion transmembrane transporter activity"/>
    <property type="evidence" value="ECO:0000266"/>
    <property type="project" value="RGD"/>
</dbReference>
<dbReference type="GO" id="GO:0048250">
    <property type="term" value="P:iron import into the mitochondrion"/>
    <property type="evidence" value="ECO:0000266"/>
    <property type="project" value="RGD"/>
</dbReference>
<dbReference type="GO" id="GO:0046985">
    <property type="term" value="P:positive regulation of hemoglobin biosynthetic process"/>
    <property type="evidence" value="ECO:0000250"/>
    <property type="project" value="UniProtKB"/>
</dbReference>
<dbReference type="FunFam" id="1.50.40.10:FF:000027">
    <property type="entry name" value="mitoferrin-2 isoform X1"/>
    <property type="match status" value="1"/>
</dbReference>
<dbReference type="FunFam" id="1.50.40.10:FF:000031">
    <property type="entry name" value="mitoferrin-2 isoform X1"/>
    <property type="match status" value="1"/>
</dbReference>
<dbReference type="Gene3D" id="1.50.40.10">
    <property type="entry name" value="Mitochondrial carrier domain"/>
    <property type="match status" value="1"/>
</dbReference>
<dbReference type="InterPro" id="IPR018108">
    <property type="entry name" value="Mitochondrial_sb/sol_carrier"/>
</dbReference>
<dbReference type="InterPro" id="IPR023395">
    <property type="entry name" value="Mt_carrier_dom_sf"/>
</dbReference>
<dbReference type="PANTHER" id="PTHR45758:SF4">
    <property type="entry name" value="MITOFERRIN-1"/>
    <property type="match status" value="1"/>
</dbReference>
<dbReference type="PANTHER" id="PTHR45758">
    <property type="entry name" value="MITOFERRIN-1-RELATED"/>
    <property type="match status" value="1"/>
</dbReference>
<dbReference type="Pfam" id="PF00153">
    <property type="entry name" value="Mito_carr"/>
    <property type="match status" value="3"/>
</dbReference>
<dbReference type="SUPFAM" id="SSF103506">
    <property type="entry name" value="Mitochondrial carrier"/>
    <property type="match status" value="1"/>
</dbReference>
<dbReference type="PROSITE" id="PS50920">
    <property type="entry name" value="SOLCAR"/>
    <property type="match status" value="3"/>
</dbReference>
<protein>
    <recommendedName>
        <fullName>Mitoferrin-1</fullName>
    </recommendedName>
    <alternativeName>
        <fullName>Mitochondrial iron transporter 1</fullName>
    </alternativeName>
    <alternativeName>
        <fullName>Solute carrier family 25 member 37</fullName>
    </alternativeName>
</protein>
<feature type="chain" id="PRO_0000235253" description="Mitoferrin-1">
    <location>
        <begin position="1"/>
        <end position="338"/>
    </location>
</feature>
<feature type="transmembrane region" description="Helical; Name=1" evidence="3">
    <location>
        <begin position="45"/>
        <end position="64"/>
    </location>
</feature>
<feature type="transmembrane region" description="Helical; Name=2" evidence="3">
    <location>
        <begin position="106"/>
        <end position="125"/>
    </location>
</feature>
<feature type="transmembrane region" description="Helical; Name=3" evidence="3">
    <location>
        <begin position="143"/>
        <end position="162"/>
    </location>
</feature>
<feature type="transmembrane region" description="Helical; Name=4" evidence="3">
    <location>
        <begin position="200"/>
        <end position="219"/>
    </location>
</feature>
<feature type="transmembrane region" description="Helical; Name=5" evidence="3">
    <location>
        <begin position="234"/>
        <end position="253"/>
    </location>
</feature>
<feature type="transmembrane region" description="Helical; Name=6" evidence="3">
    <location>
        <begin position="301"/>
        <end position="320"/>
    </location>
</feature>
<feature type="repeat" description="Solcar 1">
    <location>
        <begin position="43"/>
        <end position="131"/>
    </location>
</feature>
<feature type="repeat" description="Solcar 2">
    <location>
        <begin position="141"/>
        <end position="225"/>
    </location>
</feature>
<feature type="repeat" description="Solcar 3">
    <location>
        <begin position="232"/>
        <end position="326"/>
    </location>
</feature>
<feature type="region of interest" description="Disordered" evidence="4">
    <location>
        <begin position="1"/>
        <end position="37"/>
    </location>
</feature>
<evidence type="ECO:0000250" key="1">
    <source>
        <dbReference type="UniProtKB" id="Q287T7"/>
    </source>
</evidence>
<evidence type="ECO:0000250" key="2">
    <source>
        <dbReference type="UniProtKB" id="Q920G8"/>
    </source>
</evidence>
<evidence type="ECO:0000255" key="3"/>
<evidence type="ECO:0000256" key="4">
    <source>
        <dbReference type="SAM" id="MobiDB-lite"/>
    </source>
</evidence>
<evidence type="ECO:0000305" key="5"/>
<sequence length="338" mass="37497">MELRRGGVGSQAAGRRMDGDCRDGGCGSKDAGSEDYENLPTSASVSTHMTAGAMAGILEHSIMYPVDSVKTRMQSLNPDPKARYTSIYGALKRIMHTEGFWRPLRGLNVMMMGAGPAHAMYFACYENMKRTLNDVFSHQGNSHLANGIAGSMATLLHDAVMNPAEVVKQRLQMYNSQHQSALSCIRTVWRTEGLGAFYRSYTTQLTMNIPFQSIHFITYEFLQEQVNPRRDYNPQSHIISGGLAGALAAAATTPLDVCKTLLNTQENMALSLANVSGRLSGMANAFRTVYQLNGLAGYFKGIQARVIYQMPSTAISWSVYEFFKYFLTKRQLENRTLY</sequence>
<gene>
    <name type="primary">Slc25a37</name>
    <name type="synonym">Mfrn</name>
</gene>
<organism>
    <name type="scientific">Rattus norvegicus</name>
    <name type="common">Rat</name>
    <dbReference type="NCBI Taxonomy" id="10116"/>
    <lineage>
        <taxon>Eukaryota</taxon>
        <taxon>Metazoa</taxon>
        <taxon>Chordata</taxon>
        <taxon>Craniata</taxon>
        <taxon>Vertebrata</taxon>
        <taxon>Euteleostomi</taxon>
        <taxon>Mammalia</taxon>
        <taxon>Eutheria</taxon>
        <taxon>Euarchontoglires</taxon>
        <taxon>Glires</taxon>
        <taxon>Rodentia</taxon>
        <taxon>Myomorpha</taxon>
        <taxon>Muroidea</taxon>
        <taxon>Muridae</taxon>
        <taxon>Murinae</taxon>
        <taxon>Rattus</taxon>
    </lineage>
</organism>
<accession>Q66H23</accession>
<name>MFRN1_RAT</name>
<comment type="function">
    <text evidence="2">Mitochondrial iron transporter that specifically mediates iron uptake in developing erythroid cells, thereby playing an essential role in heme biosynthesis.</text>
</comment>
<comment type="catalytic activity">
    <reaction evidence="2">
        <text>Fe(2+)(in) = Fe(2+)(out)</text>
        <dbReference type="Rhea" id="RHEA:28486"/>
        <dbReference type="ChEBI" id="CHEBI:29033"/>
    </reaction>
</comment>
<comment type="subunit">
    <text evidence="2">Interacts with ACB10; this interaction stabilizes SLC25A37 and enhances the function of SLC25A37 to import mitochondrial iron during erythroid differentiation.</text>
</comment>
<comment type="subcellular location">
    <subcellularLocation>
        <location evidence="1">Mitochondrion inner membrane</location>
        <topology evidence="3">Multi-pass membrane protein</topology>
    </subcellularLocation>
</comment>
<comment type="similarity">
    <text evidence="5">Belongs to the mitochondrial carrier (TC 2.A.29) family.</text>
</comment>